<protein>
    <recommendedName>
        <fullName evidence="1">Large ribosomal subunit protein bL27</fullName>
    </recommendedName>
    <alternativeName>
        <fullName evidence="3">50S ribosomal protein L27</fullName>
    </alternativeName>
</protein>
<name>RL27_BURA4</name>
<keyword id="KW-0687">Ribonucleoprotein</keyword>
<keyword id="KW-0689">Ribosomal protein</keyword>
<reference key="1">
    <citation type="submission" date="2008-04" db="EMBL/GenBank/DDBJ databases">
        <title>Complete sequence of chromosome 1 of Burkholderia ambifaria MC40-6.</title>
        <authorList>
            <person name="Copeland A."/>
            <person name="Lucas S."/>
            <person name="Lapidus A."/>
            <person name="Glavina del Rio T."/>
            <person name="Dalin E."/>
            <person name="Tice H."/>
            <person name="Pitluck S."/>
            <person name="Chain P."/>
            <person name="Malfatti S."/>
            <person name="Shin M."/>
            <person name="Vergez L."/>
            <person name="Lang D."/>
            <person name="Schmutz J."/>
            <person name="Larimer F."/>
            <person name="Land M."/>
            <person name="Hauser L."/>
            <person name="Kyrpides N."/>
            <person name="Lykidis A."/>
            <person name="Ramette A."/>
            <person name="Konstantinidis K."/>
            <person name="Tiedje J."/>
            <person name="Richardson P."/>
        </authorList>
    </citation>
    <scope>NUCLEOTIDE SEQUENCE [LARGE SCALE GENOMIC DNA]</scope>
    <source>
        <strain>MC40-6</strain>
    </source>
</reference>
<sequence>MAHKKAGGSSRNGRDSESKRLGVKVYGGQAINAGGIIVRQRGTRMHAGENVGMGKDHTLFALVDGHVKFATKGADKKHLVIVVPAAA</sequence>
<gene>
    <name evidence="1" type="primary">rpmA</name>
    <name type="ordered locus">BamMC406_0510</name>
</gene>
<dbReference type="EMBL" id="CP001025">
    <property type="protein sequence ID" value="ACB63007.1"/>
    <property type="molecule type" value="Genomic_DNA"/>
</dbReference>
<dbReference type="RefSeq" id="WP_006476999.1">
    <property type="nucleotide sequence ID" value="NC_010551.1"/>
</dbReference>
<dbReference type="SMR" id="B1YSU6"/>
<dbReference type="GeneID" id="98106573"/>
<dbReference type="KEGG" id="bac:BamMC406_0510"/>
<dbReference type="HOGENOM" id="CLU_095424_4_1_4"/>
<dbReference type="OrthoDB" id="9803474at2"/>
<dbReference type="Proteomes" id="UP000001680">
    <property type="component" value="Chromosome 1"/>
</dbReference>
<dbReference type="GO" id="GO:0022625">
    <property type="term" value="C:cytosolic large ribosomal subunit"/>
    <property type="evidence" value="ECO:0007669"/>
    <property type="project" value="TreeGrafter"/>
</dbReference>
<dbReference type="GO" id="GO:0003735">
    <property type="term" value="F:structural constituent of ribosome"/>
    <property type="evidence" value="ECO:0007669"/>
    <property type="project" value="InterPro"/>
</dbReference>
<dbReference type="GO" id="GO:0006412">
    <property type="term" value="P:translation"/>
    <property type="evidence" value="ECO:0007669"/>
    <property type="project" value="UniProtKB-UniRule"/>
</dbReference>
<dbReference type="FunFam" id="2.40.50.100:FF:000001">
    <property type="entry name" value="50S ribosomal protein L27"/>
    <property type="match status" value="1"/>
</dbReference>
<dbReference type="Gene3D" id="2.40.50.100">
    <property type="match status" value="1"/>
</dbReference>
<dbReference type="HAMAP" id="MF_00539">
    <property type="entry name" value="Ribosomal_bL27"/>
    <property type="match status" value="1"/>
</dbReference>
<dbReference type="InterPro" id="IPR001684">
    <property type="entry name" value="Ribosomal_bL27"/>
</dbReference>
<dbReference type="InterPro" id="IPR018261">
    <property type="entry name" value="Ribosomal_bL27_CS"/>
</dbReference>
<dbReference type="NCBIfam" id="TIGR00062">
    <property type="entry name" value="L27"/>
    <property type="match status" value="1"/>
</dbReference>
<dbReference type="PANTHER" id="PTHR15893:SF0">
    <property type="entry name" value="LARGE RIBOSOMAL SUBUNIT PROTEIN BL27M"/>
    <property type="match status" value="1"/>
</dbReference>
<dbReference type="PANTHER" id="PTHR15893">
    <property type="entry name" value="RIBOSOMAL PROTEIN L27"/>
    <property type="match status" value="1"/>
</dbReference>
<dbReference type="Pfam" id="PF01016">
    <property type="entry name" value="Ribosomal_L27"/>
    <property type="match status" value="1"/>
</dbReference>
<dbReference type="PRINTS" id="PR00063">
    <property type="entry name" value="RIBOSOMALL27"/>
</dbReference>
<dbReference type="SUPFAM" id="SSF110324">
    <property type="entry name" value="Ribosomal L27 protein-like"/>
    <property type="match status" value="1"/>
</dbReference>
<dbReference type="PROSITE" id="PS00831">
    <property type="entry name" value="RIBOSOMAL_L27"/>
    <property type="match status" value="1"/>
</dbReference>
<evidence type="ECO:0000255" key="1">
    <source>
        <dbReference type="HAMAP-Rule" id="MF_00539"/>
    </source>
</evidence>
<evidence type="ECO:0000256" key="2">
    <source>
        <dbReference type="SAM" id="MobiDB-lite"/>
    </source>
</evidence>
<evidence type="ECO:0000305" key="3"/>
<feature type="chain" id="PRO_1000128704" description="Large ribosomal subunit protein bL27">
    <location>
        <begin position="1"/>
        <end position="87"/>
    </location>
</feature>
<feature type="region of interest" description="Disordered" evidence="2">
    <location>
        <begin position="1"/>
        <end position="21"/>
    </location>
</feature>
<organism>
    <name type="scientific">Burkholderia ambifaria (strain MC40-6)</name>
    <dbReference type="NCBI Taxonomy" id="398577"/>
    <lineage>
        <taxon>Bacteria</taxon>
        <taxon>Pseudomonadati</taxon>
        <taxon>Pseudomonadota</taxon>
        <taxon>Betaproteobacteria</taxon>
        <taxon>Burkholderiales</taxon>
        <taxon>Burkholderiaceae</taxon>
        <taxon>Burkholderia</taxon>
        <taxon>Burkholderia cepacia complex</taxon>
    </lineage>
</organism>
<accession>B1YSU6</accession>
<proteinExistence type="inferred from homology"/>
<comment type="similarity">
    <text evidence="1">Belongs to the bacterial ribosomal protein bL27 family.</text>
</comment>